<dbReference type="EMBL" id="CU329670">
    <property type="protein sequence ID" value="CAB55281.1"/>
    <property type="molecule type" value="Genomic_DNA"/>
</dbReference>
<dbReference type="PIR" id="T39094">
    <property type="entry name" value="T39094"/>
</dbReference>
<dbReference type="RefSeq" id="NP_592852.1">
    <property type="nucleotide sequence ID" value="NM_001018253.2"/>
</dbReference>
<dbReference type="SMR" id="Q9UT57"/>
<dbReference type="FunCoup" id="Q9UT57">
    <property type="interactions" value="328"/>
</dbReference>
<dbReference type="STRING" id="284812.Q9UT57"/>
<dbReference type="iPTMnet" id="Q9UT57"/>
<dbReference type="PaxDb" id="4896-SPAC806.02c.1"/>
<dbReference type="EnsemblFungi" id="SPAC806.02c.1">
    <property type="protein sequence ID" value="SPAC806.02c.1:pep"/>
    <property type="gene ID" value="SPAC806.02c"/>
</dbReference>
<dbReference type="KEGG" id="spo:2542122"/>
<dbReference type="PomBase" id="SPAC806.02c"/>
<dbReference type="VEuPathDB" id="FungiDB:SPAC806.02c"/>
<dbReference type="eggNOG" id="KOG0645">
    <property type="taxonomic scope" value="Eukaryota"/>
</dbReference>
<dbReference type="eggNOG" id="KOG3022">
    <property type="taxonomic scope" value="Eukaryota"/>
</dbReference>
<dbReference type="HOGENOM" id="CLU_030983_0_0_1"/>
<dbReference type="InParanoid" id="Q9UT57"/>
<dbReference type="OMA" id="IDDDWEC"/>
<dbReference type="PhylomeDB" id="Q9UT57"/>
<dbReference type="PRO" id="PR:Q9UT57"/>
<dbReference type="Proteomes" id="UP000002485">
    <property type="component" value="Chromosome I"/>
</dbReference>
<dbReference type="GO" id="GO:0005829">
    <property type="term" value="C:cytosol"/>
    <property type="evidence" value="ECO:0007005"/>
    <property type="project" value="PomBase"/>
</dbReference>
<dbReference type="GO" id="GO:1904564">
    <property type="term" value="C:cytosolic [4Fe-4S] assembly scaffold complex"/>
    <property type="evidence" value="ECO:0000304"/>
    <property type="project" value="PomBase"/>
</dbReference>
<dbReference type="GO" id="GO:0097361">
    <property type="term" value="C:cytosolic [4Fe-4S] assembly targeting complex"/>
    <property type="evidence" value="ECO:0007669"/>
    <property type="project" value="InterPro"/>
</dbReference>
<dbReference type="GO" id="GO:0005634">
    <property type="term" value="C:nucleus"/>
    <property type="evidence" value="ECO:0007005"/>
    <property type="project" value="PomBase"/>
</dbReference>
<dbReference type="GO" id="GO:0051539">
    <property type="term" value="F:4 iron, 4 sulfur cluster binding"/>
    <property type="evidence" value="ECO:0007669"/>
    <property type="project" value="UniProtKB-UniRule"/>
</dbReference>
<dbReference type="GO" id="GO:0005524">
    <property type="term" value="F:ATP binding"/>
    <property type="evidence" value="ECO:0000266"/>
    <property type="project" value="PomBase"/>
</dbReference>
<dbReference type="GO" id="GO:0016887">
    <property type="term" value="F:ATP hydrolysis activity"/>
    <property type="evidence" value="ECO:0000266"/>
    <property type="project" value="PomBase"/>
</dbReference>
<dbReference type="GO" id="GO:0140663">
    <property type="term" value="F:ATP-dependent FeS chaperone activity"/>
    <property type="evidence" value="ECO:0007669"/>
    <property type="project" value="InterPro"/>
</dbReference>
<dbReference type="GO" id="GO:0051536">
    <property type="term" value="F:iron-sulfur cluster binding"/>
    <property type="evidence" value="ECO:0000318"/>
    <property type="project" value="GO_Central"/>
</dbReference>
<dbReference type="GO" id="GO:0046872">
    <property type="term" value="F:metal ion binding"/>
    <property type="evidence" value="ECO:0007669"/>
    <property type="project" value="UniProtKB-KW"/>
</dbReference>
<dbReference type="GO" id="GO:0016226">
    <property type="term" value="P:iron-sulfur cluster assembly"/>
    <property type="evidence" value="ECO:0000318"/>
    <property type="project" value="GO_Central"/>
</dbReference>
<dbReference type="CDD" id="cd02037">
    <property type="entry name" value="Mrp_NBP35"/>
    <property type="match status" value="1"/>
</dbReference>
<dbReference type="CDD" id="cd00200">
    <property type="entry name" value="WD40"/>
    <property type="match status" value="1"/>
</dbReference>
<dbReference type="FunFam" id="3.40.50.300:FF:004040">
    <property type="entry name" value="Cytosolic Fe-S cluster assembly factor NUBP1 homolog"/>
    <property type="match status" value="1"/>
</dbReference>
<dbReference type="Gene3D" id="3.40.50.300">
    <property type="entry name" value="P-loop containing nucleotide triphosphate hydrolases"/>
    <property type="match status" value="1"/>
</dbReference>
<dbReference type="Gene3D" id="2.130.10.10">
    <property type="entry name" value="YVTN repeat-like/Quinoprotein amine dehydrogenase"/>
    <property type="match status" value="1"/>
</dbReference>
<dbReference type="HAMAP" id="MF_03037">
    <property type="entry name" value="ciao1"/>
    <property type="match status" value="1"/>
</dbReference>
<dbReference type="HAMAP" id="MF_02040">
    <property type="entry name" value="Mrp_NBP35"/>
    <property type="match status" value="1"/>
</dbReference>
<dbReference type="HAMAP" id="MF_03039">
    <property type="entry name" value="NUBP2"/>
    <property type="match status" value="1"/>
</dbReference>
<dbReference type="InterPro" id="IPR028608">
    <property type="entry name" value="CIAO1/Cia1"/>
</dbReference>
<dbReference type="InterPro" id="IPR000808">
    <property type="entry name" value="Mrp-like_CS"/>
</dbReference>
<dbReference type="InterPro" id="IPR019591">
    <property type="entry name" value="Mrp/NBP35_ATP-bd"/>
</dbReference>
<dbReference type="InterPro" id="IPR028600">
    <property type="entry name" value="NUBP2/Cfd1_eukaryotes"/>
</dbReference>
<dbReference type="InterPro" id="IPR027417">
    <property type="entry name" value="P-loop_NTPase"/>
</dbReference>
<dbReference type="InterPro" id="IPR015943">
    <property type="entry name" value="WD40/YVTN_repeat-like_dom_sf"/>
</dbReference>
<dbReference type="InterPro" id="IPR036322">
    <property type="entry name" value="WD40_repeat_dom_sf"/>
</dbReference>
<dbReference type="InterPro" id="IPR001680">
    <property type="entry name" value="WD40_rpt"/>
</dbReference>
<dbReference type="InterPro" id="IPR033756">
    <property type="entry name" value="YlxH/NBP35"/>
</dbReference>
<dbReference type="PANTHER" id="PTHR23264:SF19">
    <property type="entry name" value="CYTOSOLIC FE-S CLUSTER ASSEMBLY FACTOR NUBP2"/>
    <property type="match status" value="1"/>
</dbReference>
<dbReference type="PANTHER" id="PTHR23264">
    <property type="entry name" value="NUCLEOTIDE-BINDING PROTEIN NBP35 YEAST -RELATED"/>
    <property type="match status" value="1"/>
</dbReference>
<dbReference type="Pfam" id="PF10609">
    <property type="entry name" value="ParA"/>
    <property type="match status" value="1"/>
</dbReference>
<dbReference type="Pfam" id="PF00400">
    <property type="entry name" value="WD40"/>
    <property type="match status" value="6"/>
</dbReference>
<dbReference type="SMART" id="SM00320">
    <property type="entry name" value="WD40"/>
    <property type="match status" value="7"/>
</dbReference>
<dbReference type="SUPFAM" id="SSF52540">
    <property type="entry name" value="P-loop containing nucleoside triphosphate hydrolases"/>
    <property type="match status" value="1"/>
</dbReference>
<dbReference type="SUPFAM" id="SSF50978">
    <property type="entry name" value="WD40 repeat-like"/>
    <property type="match status" value="1"/>
</dbReference>
<dbReference type="PROSITE" id="PS01215">
    <property type="entry name" value="MRP"/>
    <property type="match status" value="1"/>
</dbReference>
<dbReference type="PROSITE" id="PS00678">
    <property type="entry name" value="WD_REPEATS_1"/>
    <property type="match status" value="1"/>
</dbReference>
<dbReference type="PROSITE" id="PS50082">
    <property type="entry name" value="WD_REPEATS_2"/>
    <property type="match status" value="5"/>
</dbReference>
<dbReference type="PROSITE" id="PS50294">
    <property type="entry name" value="WD_REPEATS_REGION"/>
    <property type="match status" value="1"/>
</dbReference>
<organism>
    <name type="scientific">Schizosaccharomyces pombe (strain 972 / ATCC 24843)</name>
    <name type="common">Fission yeast</name>
    <dbReference type="NCBI Taxonomy" id="284812"/>
    <lineage>
        <taxon>Eukaryota</taxon>
        <taxon>Fungi</taxon>
        <taxon>Dikarya</taxon>
        <taxon>Ascomycota</taxon>
        <taxon>Taphrinomycotina</taxon>
        <taxon>Schizosaccharomycetes</taxon>
        <taxon>Schizosaccharomycetales</taxon>
        <taxon>Schizosaccharomycetaceae</taxon>
        <taxon>Schizosaccharomyces</taxon>
    </lineage>
</organism>
<sequence>MDKVQHVILVLSGKGGVGKSSVTTQLALSLHDSKVYSRPLKTGILDIDLTGPSIPRMFGKDAERNRIHQSSAGWVPVYTDETKEIGLMSLGFLLTSKNDSVVWRGPKKAAMIRQFISDVSWGELDFLIIDTPPGTGDEHLTIVESLLSETSTVRDVPIDGAVIVTTPQGIATLDVQKEIDFCKKASIKILGIVENMSGYICPHCADCTNIFSSGGGLTLSEKYKLPFLGSVPIDPKFGEMIENLTPDSNIVHLYSKTEMSKKFSFITNEFLNQLYGPRKLDTITTISGHTGRLWSVAAHPMLPLFATSSQDKSVRIYNSNTYNLVHVIDGFHTRSIRRVAWRPIERPVLAVASFDSVVSINEKIDDDWECTAALEGHENEVKCIAWSCNGNYLATCSRDKSVWIWEATEDDEFDCLAVLQEHTQDVKVVTWHPTEDLLVSGSYDNSICFWRDDGDDWALTCQLQGHTNTVWALAFSPNGNTLASADNDGNVFLWIKISSNEDVATIDSTNILRPALQEEWKQQTSLPHIHKGAVYTISWMNDATLCSAGGDGKIVVYQREKHDEALWHVAYEQDHAHGVYEINSLEYLRDDRLLSGGDDGECRVWSFK</sequence>
<accession>Q9UT57</accession>
<feature type="chain" id="PRO_0000278883" description="Probable cytosolic Fe-S cluster assembly factor SPAC806.02c">
    <location>
        <begin position="1"/>
        <end position="608"/>
    </location>
</feature>
<feature type="repeat" description="WD 1">
    <location>
        <begin position="288"/>
        <end position="327"/>
    </location>
</feature>
<feature type="repeat" description="WD 2">
    <location>
        <begin position="331"/>
        <end position="371"/>
    </location>
</feature>
<feature type="repeat" description="WD 3">
    <location>
        <begin position="376"/>
        <end position="415"/>
    </location>
</feature>
<feature type="repeat" description="WD 4">
    <location>
        <begin position="421"/>
        <end position="460"/>
    </location>
</feature>
<feature type="repeat" description="WD 5">
    <location>
        <begin position="465"/>
        <end position="504"/>
    </location>
</feature>
<feature type="repeat" description="WD 6">
    <location>
        <begin position="529"/>
        <end position="567"/>
    </location>
</feature>
<feature type="repeat" description="WD 7">
    <location>
        <begin position="576"/>
        <end position="608"/>
    </location>
</feature>
<feature type="binding site" evidence="2">
    <location>
        <begin position="13"/>
        <end position="20"/>
    </location>
    <ligand>
        <name>ATP</name>
        <dbReference type="ChEBI" id="CHEBI:30616"/>
    </ligand>
</feature>
<feature type="binding site" evidence="1">
    <location>
        <position position="201"/>
    </location>
    <ligand>
        <name>[4Fe-4S] cluster</name>
        <dbReference type="ChEBI" id="CHEBI:49883"/>
        <note>ligand shared between dimeric partners</note>
    </ligand>
</feature>
<feature type="binding site" evidence="1">
    <location>
        <position position="204"/>
    </location>
    <ligand>
        <name>[4Fe-4S] cluster</name>
        <dbReference type="ChEBI" id="CHEBI:49883"/>
        <note>ligand shared between dimeric partners</note>
    </ligand>
</feature>
<evidence type="ECO:0000250" key="1"/>
<evidence type="ECO:0000255" key="2"/>
<evidence type="ECO:0000269" key="3">
    <source>
    </source>
</evidence>
<evidence type="ECO:0000305" key="4"/>
<gene>
    <name type="ORF">SPAC806.02c</name>
</gene>
<reference key="1">
    <citation type="journal article" date="2002" name="Nature">
        <title>The genome sequence of Schizosaccharomyces pombe.</title>
        <authorList>
            <person name="Wood V."/>
            <person name="Gwilliam R."/>
            <person name="Rajandream M.A."/>
            <person name="Lyne M.H."/>
            <person name="Lyne R."/>
            <person name="Stewart A."/>
            <person name="Sgouros J.G."/>
            <person name="Peat N."/>
            <person name="Hayles J."/>
            <person name="Baker S.G."/>
            <person name="Basham D."/>
            <person name="Bowman S."/>
            <person name="Brooks K."/>
            <person name="Brown D."/>
            <person name="Brown S."/>
            <person name="Chillingworth T."/>
            <person name="Churcher C.M."/>
            <person name="Collins M."/>
            <person name="Connor R."/>
            <person name="Cronin A."/>
            <person name="Davis P."/>
            <person name="Feltwell T."/>
            <person name="Fraser A."/>
            <person name="Gentles S."/>
            <person name="Goble A."/>
            <person name="Hamlin N."/>
            <person name="Harris D.E."/>
            <person name="Hidalgo J."/>
            <person name="Hodgson G."/>
            <person name="Holroyd S."/>
            <person name="Hornsby T."/>
            <person name="Howarth S."/>
            <person name="Huckle E.J."/>
            <person name="Hunt S."/>
            <person name="Jagels K."/>
            <person name="James K.D."/>
            <person name="Jones L."/>
            <person name="Jones M."/>
            <person name="Leather S."/>
            <person name="McDonald S."/>
            <person name="McLean J."/>
            <person name="Mooney P."/>
            <person name="Moule S."/>
            <person name="Mungall K.L."/>
            <person name="Murphy L.D."/>
            <person name="Niblett D."/>
            <person name="Odell C."/>
            <person name="Oliver K."/>
            <person name="O'Neil S."/>
            <person name="Pearson D."/>
            <person name="Quail M.A."/>
            <person name="Rabbinowitsch E."/>
            <person name="Rutherford K.M."/>
            <person name="Rutter S."/>
            <person name="Saunders D."/>
            <person name="Seeger K."/>
            <person name="Sharp S."/>
            <person name="Skelton J."/>
            <person name="Simmonds M.N."/>
            <person name="Squares R."/>
            <person name="Squares S."/>
            <person name="Stevens K."/>
            <person name="Taylor K."/>
            <person name="Taylor R.G."/>
            <person name="Tivey A."/>
            <person name="Walsh S.V."/>
            <person name="Warren T."/>
            <person name="Whitehead S."/>
            <person name="Woodward J.R."/>
            <person name="Volckaert G."/>
            <person name="Aert R."/>
            <person name="Robben J."/>
            <person name="Grymonprez B."/>
            <person name="Weltjens I."/>
            <person name="Vanstreels E."/>
            <person name="Rieger M."/>
            <person name="Schaefer M."/>
            <person name="Mueller-Auer S."/>
            <person name="Gabel C."/>
            <person name="Fuchs M."/>
            <person name="Duesterhoeft A."/>
            <person name="Fritzc C."/>
            <person name="Holzer E."/>
            <person name="Moestl D."/>
            <person name="Hilbert H."/>
            <person name="Borzym K."/>
            <person name="Langer I."/>
            <person name="Beck A."/>
            <person name="Lehrach H."/>
            <person name="Reinhardt R."/>
            <person name="Pohl T.M."/>
            <person name="Eger P."/>
            <person name="Zimmermann W."/>
            <person name="Wedler H."/>
            <person name="Wambutt R."/>
            <person name="Purnelle B."/>
            <person name="Goffeau A."/>
            <person name="Cadieu E."/>
            <person name="Dreano S."/>
            <person name="Gloux S."/>
            <person name="Lelaure V."/>
            <person name="Mottier S."/>
            <person name="Galibert F."/>
            <person name="Aves S.J."/>
            <person name="Xiang Z."/>
            <person name="Hunt C."/>
            <person name="Moore K."/>
            <person name="Hurst S.M."/>
            <person name="Lucas M."/>
            <person name="Rochet M."/>
            <person name="Gaillardin C."/>
            <person name="Tallada V.A."/>
            <person name="Garzon A."/>
            <person name="Thode G."/>
            <person name="Daga R.R."/>
            <person name="Cruzado L."/>
            <person name="Jimenez J."/>
            <person name="Sanchez M."/>
            <person name="del Rey F."/>
            <person name="Benito J."/>
            <person name="Dominguez A."/>
            <person name="Revuelta J.L."/>
            <person name="Moreno S."/>
            <person name="Armstrong J."/>
            <person name="Forsburg S.L."/>
            <person name="Cerutti L."/>
            <person name="Lowe T."/>
            <person name="McCombie W.R."/>
            <person name="Paulsen I."/>
            <person name="Potashkin J."/>
            <person name="Shpakovski G.V."/>
            <person name="Ussery D."/>
            <person name="Barrell B.G."/>
            <person name="Nurse P."/>
        </authorList>
    </citation>
    <scope>NUCLEOTIDE SEQUENCE [LARGE SCALE GENOMIC DNA]</scope>
    <source>
        <strain>972 / ATCC 24843</strain>
    </source>
</reference>
<reference key="2">
    <citation type="journal article" date="2006" name="Nat. Biotechnol.">
        <title>ORFeome cloning and global analysis of protein localization in the fission yeast Schizosaccharomyces pombe.</title>
        <authorList>
            <person name="Matsuyama A."/>
            <person name="Arai R."/>
            <person name="Yashiroda Y."/>
            <person name="Shirai A."/>
            <person name="Kamata A."/>
            <person name="Sekido S."/>
            <person name="Kobayashi Y."/>
            <person name="Hashimoto A."/>
            <person name="Hamamoto M."/>
            <person name="Hiraoka Y."/>
            <person name="Horinouchi S."/>
            <person name="Yoshida M."/>
        </authorList>
    </citation>
    <scope>SUBCELLULAR LOCATION [LARGE SCALE ANALYSIS]</scope>
</reference>
<proteinExistence type="inferred from homology"/>
<keyword id="KW-0004">4Fe-4S</keyword>
<keyword id="KW-0067">ATP-binding</keyword>
<keyword id="KW-0963">Cytoplasm</keyword>
<keyword id="KW-0408">Iron</keyword>
<keyword id="KW-0411">Iron-sulfur</keyword>
<keyword id="KW-0479">Metal-binding</keyword>
<keyword id="KW-0547">Nucleotide-binding</keyword>
<keyword id="KW-0539">Nucleus</keyword>
<keyword id="KW-1185">Reference proteome</keyword>
<keyword id="KW-0677">Repeat</keyword>
<keyword id="KW-0853">WD repeat</keyword>
<protein>
    <recommendedName>
        <fullName>Probable cytosolic Fe-S cluster assembly factor SPAC806.02c</fullName>
    </recommendedName>
</protein>
<comment type="function">
    <text evidence="1">Fusion protein of two essential components of the cytosolic iron-sulfur (Fe/S) protein assembly (CIA) machinery. Required for maturation of extramitochondrial Fe-S proteins. May form a heterotetramer with nubp35, functioning as a Fe-S scaffold complex, mediating the de novo assembly of an Fe-S cluster and its transfer to target apoproteins (By similarity).</text>
</comment>
<comment type="cofactor">
    <cofactor evidence="1">
        <name>[4Fe-4S] cluster</name>
        <dbReference type="ChEBI" id="CHEBI:49883"/>
    </cofactor>
    <text evidence="1">Binds 4 [4Fe-4S] clusters per heterotetramer. Contains two stable clusters in the N-termini of nbp35 and two labile, bridging clusters between subunits of the nbp35-SPAC806.02c heterotetramer.</text>
</comment>
<comment type="subunit">
    <text evidence="1">Heterotetramer of 2 nbp35 and 2 SPAC806.02c chains.</text>
</comment>
<comment type="subcellular location">
    <subcellularLocation>
        <location evidence="3">Cytoplasm</location>
    </subcellularLocation>
    <subcellularLocation>
        <location evidence="3">Nucleus</location>
    </subcellularLocation>
</comment>
<comment type="miscellaneous">
    <text>Results from a fusion of two genes coding for two proteins which both play a role in assembly of Fe-S clusters in other species (CFD1 and CIA1 in S.cerevisiae).</text>
</comment>
<comment type="similarity">
    <text evidence="4">In the N-terminal section; belongs to the Mrp/NBP35 ATP-binding proteins family. NUBP2/CFD1 subfamily.</text>
</comment>
<comment type="similarity">
    <text evidence="4">In the C-terminal section; belongs to the WD repeat CIA1 family.</text>
</comment>
<name>CFD1_SCHPO</name>